<proteinExistence type="inferred from homology"/>
<keyword id="KW-0004">4Fe-4S</keyword>
<keyword id="KW-0013">ADP-ribosylation</keyword>
<keyword id="KW-0067">ATP-binding</keyword>
<keyword id="KW-0408">Iron</keyword>
<keyword id="KW-0411">Iron-sulfur</keyword>
<keyword id="KW-0479">Metal-binding</keyword>
<keyword id="KW-0535">Nitrogen fixation</keyword>
<keyword id="KW-0547">Nucleotide-binding</keyword>
<keyword id="KW-0560">Oxidoreductase</keyword>
<keyword id="KW-1185">Reference proteome</keyword>
<feature type="chain" id="PRO_1000211896" description="Nitrogenase iron protein">
    <location>
        <begin position="1"/>
        <end position="295"/>
    </location>
</feature>
<feature type="binding site" evidence="1">
    <location>
        <begin position="11"/>
        <end position="18"/>
    </location>
    <ligand>
        <name>ATP</name>
        <dbReference type="ChEBI" id="CHEBI:30616"/>
    </ligand>
</feature>
<feature type="binding site" evidence="1">
    <location>
        <position position="99"/>
    </location>
    <ligand>
        <name>[4Fe-4S] cluster</name>
        <dbReference type="ChEBI" id="CHEBI:49883"/>
        <note>ligand shared between dimeric partners</note>
    </ligand>
</feature>
<feature type="binding site" evidence="1">
    <location>
        <position position="133"/>
    </location>
    <ligand>
        <name>[4Fe-4S] cluster</name>
        <dbReference type="ChEBI" id="CHEBI:49883"/>
        <note>ligand shared between dimeric partners</note>
    </ligand>
</feature>
<feature type="modified residue" description="ADP-ribosylarginine; by dinitrogenase reductase ADP-ribosyltransferase" evidence="1">
    <location>
        <position position="102"/>
    </location>
</feature>
<name>NIFH_ZYMMO</name>
<accession>Q5NLG3</accession>
<dbReference type="EC" id="1.18.6.1" evidence="1"/>
<dbReference type="EMBL" id="AE008692">
    <property type="protein sequence ID" value="AAV90447.1"/>
    <property type="molecule type" value="Genomic_DNA"/>
</dbReference>
<dbReference type="RefSeq" id="WP_011241556.1">
    <property type="nucleotide sequence ID" value="NZ_CP035711.1"/>
</dbReference>
<dbReference type="SMR" id="Q5NLG3"/>
<dbReference type="STRING" id="264203.ZMO1823"/>
<dbReference type="GeneID" id="79904865"/>
<dbReference type="KEGG" id="zmo:ZMO1823"/>
<dbReference type="eggNOG" id="COG1348">
    <property type="taxonomic scope" value="Bacteria"/>
</dbReference>
<dbReference type="HOGENOM" id="CLU_059373_0_0_5"/>
<dbReference type="Proteomes" id="UP000001173">
    <property type="component" value="Chromosome"/>
</dbReference>
<dbReference type="GO" id="GO:0051539">
    <property type="term" value="F:4 iron, 4 sulfur cluster binding"/>
    <property type="evidence" value="ECO:0007669"/>
    <property type="project" value="UniProtKB-KW"/>
</dbReference>
<dbReference type="GO" id="GO:0005524">
    <property type="term" value="F:ATP binding"/>
    <property type="evidence" value="ECO:0007669"/>
    <property type="project" value="UniProtKB-UniRule"/>
</dbReference>
<dbReference type="GO" id="GO:0046872">
    <property type="term" value="F:metal ion binding"/>
    <property type="evidence" value="ECO:0007669"/>
    <property type="project" value="UniProtKB-KW"/>
</dbReference>
<dbReference type="GO" id="GO:0016163">
    <property type="term" value="F:nitrogenase activity"/>
    <property type="evidence" value="ECO:0007669"/>
    <property type="project" value="UniProtKB-UniRule"/>
</dbReference>
<dbReference type="GO" id="GO:0009399">
    <property type="term" value="P:nitrogen fixation"/>
    <property type="evidence" value="ECO:0007669"/>
    <property type="project" value="UniProtKB-UniRule"/>
</dbReference>
<dbReference type="CDD" id="cd02040">
    <property type="entry name" value="NifH"/>
    <property type="match status" value="1"/>
</dbReference>
<dbReference type="FunFam" id="3.40.50.300:FF:001379">
    <property type="entry name" value="Nitrogenase iron protein 1"/>
    <property type="match status" value="1"/>
</dbReference>
<dbReference type="Gene3D" id="3.40.50.300">
    <property type="entry name" value="P-loop containing nucleotide triphosphate hydrolases"/>
    <property type="match status" value="1"/>
</dbReference>
<dbReference type="HAMAP" id="MF_00533">
    <property type="entry name" value="NifH"/>
    <property type="match status" value="1"/>
</dbReference>
<dbReference type="InterPro" id="IPR030655">
    <property type="entry name" value="NifH/chlL_CS"/>
</dbReference>
<dbReference type="InterPro" id="IPR000392">
    <property type="entry name" value="NifH/frxC"/>
</dbReference>
<dbReference type="InterPro" id="IPR005977">
    <property type="entry name" value="Nitrogenase_Fe_NifH"/>
</dbReference>
<dbReference type="InterPro" id="IPR027417">
    <property type="entry name" value="P-loop_NTPase"/>
</dbReference>
<dbReference type="NCBIfam" id="TIGR01287">
    <property type="entry name" value="nifH"/>
    <property type="match status" value="1"/>
</dbReference>
<dbReference type="PANTHER" id="PTHR42864">
    <property type="entry name" value="LIGHT-INDEPENDENT PROTOCHLOROPHYLLIDE REDUCTASE IRON-SULFUR ATP-BINDING PROTEIN"/>
    <property type="match status" value="1"/>
</dbReference>
<dbReference type="PANTHER" id="PTHR42864:SF2">
    <property type="entry name" value="LIGHT-INDEPENDENT PROTOCHLOROPHYLLIDE REDUCTASE IRON-SULFUR ATP-BINDING PROTEIN"/>
    <property type="match status" value="1"/>
</dbReference>
<dbReference type="Pfam" id="PF00142">
    <property type="entry name" value="Fer4_NifH"/>
    <property type="match status" value="1"/>
</dbReference>
<dbReference type="PIRSF" id="PIRSF000363">
    <property type="entry name" value="Nitrogenase_iron"/>
    <property type="match status" value="1"/>
</dbReference>
<dbReference type="PRINTS" id="PR00091">
    <property type="entry name" value="NITROGNASEII"/>
</dbReference>
<dbReference type="SUPFAM" id="SSF52540">
    <property type="entry name" value="P-loop containing nucleoside triphosphate hydrolases"/>
    <property type="match status" value="1"/>
</dbReference>
<dbReference type="PROSITE" id="PS00746">
    <property type="entry name" value="NIFH_FRXC_1"/>
    <property type="match status" value="1"/>
</dbReference>
<dbReference type="PROSITE" id="PS00692">
    <property type="entry name" value="NIFH_FRXC_2"/>
    <property type="match status" value="1"/>
</dbReference>
<dbReference type="PROSITE" id="PS51026">
    <property type="entry name" value="NIFH_FRXC_3"/>
    <property type="match status" value="1"/>
</dbReference>
<protein>
    <recommendedName>
        <fullName evidence="1">Nitrogenase iron protein</fullName>
        <ecNumber evidence="1">1.18.6.1</ecNumber>
    </recommendedName>
    <alternativeName>
        <fullName evidence="1">Nitrogenase Fe protein</fullName>
    </alternativeName>
    <alternativeName>
        <fullName evidence="1">Nitrogenase component II</fullName>
    </alternativeName>
    <alternativeName>
        <fullName evidence="1">Nitrogenase reductase</fullName>
    </alternativeName>
</protein>
<reference key="1">
    <citation type="journal article" date="2005" name="Nat. Biotechnol.">
        <title>The genome sequence of the ethanologenic bacterium Zymomonas mobilis ZM4.</title>
        <authorList>
            <person name="Seo J.-S."/>
            <person name="Chong H."/>
            <person name="Park H.S."/>
            <person name="Yoon K.-O."/>
            <person name="Jung C."/>
            <person name="Kim J.J."/>
            <person name="Hong J.H."/>
            <person name="Kim H."/>
            <person name="Kim J.-H."/>
            <person name="Kil J.-I."/>
            <person name="Park C.J."/>
            <person name="Oh H.-M."/>
            <person name="Lee J.-S."/>
            <person name="Jin S.-J."/>
            <person name="Um H.-W."/>
            <person name="Lee H.-J."/>
            <person name="Oh S.-J."/>
            <person name="Kim J.Y."/>
            <person name="Kang H.L."/>
            <person name="Lee S.Y."/>
            <person name="Lee K.J."/>
            <person name="Kang H.S."/>
        </authorList>
    </citation>
    <scope>NUCLEOTIDE SEQUENCE [LARGE SCALE GENOMIC DNA]</scope>
    <source>
        <strain>ATCC 31821 / ZM4 / CP4</strain>
    </source>
</reference>
<comment type="function">
    <text evidence="1">The key enzymatic reactions in nitrogen fixation are catalyzed by the nitrogenase complex, which has 2 components: the iron protein and the molybdenum-iron protein.</text>
</comment>
<comment type="catalytic activity">
    <reaction evidence="1">
        <text>N2 + 8 reduced [2Fe-2S]-[ferredoxin] + 16 ATP + 16 H2O = H2 + 8 oxidized [2Fe-2S]-[ferredoxin] + 2 NH4(+) + 16 ADP + 16 phosphate + 6 H(+)</text>
        <dbReference type="Rhea" id="RHEA:21448"/>
        <dbReference type="Rhea" id="RHEA-COMP:10000"/>
        <dbReference type="Rhea" id="RHEA-COMP:10001"/>
        <dbReference type="ChEBI" id="CHEBI:15377"/>
        <dbReference type="ChEBI" id="CHEBI:15378"/>
        <dbReference type="ChEBI" id="CHEBI:17997"/>
        <dbReference type="ChEBI" id="CHEBI:18276"/>
        <dbReference type="ChEBI" id="CHEBI:28938"/>
        <dbReference type="ChEBI" id="CHEBI:30616"/>
        <dbReference type="ChEBI" id="CHEBI:33737"/>
        <dbReference type="ChEBI" id="CHEBI:33738"/>
        <dbReference type="ChEBI" id="CHEBI:43474"/>
        <dbReference type="ChEBI" id="CHEBI:456216"/>
        <dbReference type="EC" id="1.18.6.1"/>
    </reaction>
</comment>
<comment type="cofactor">
    <cofactor evidence="1">
        <name>[4Fe-4S] cluster</name>
        <dbReference type="ChEBI" id="CHEBI:49883"/>
    </cofactor>
    <text evidence="1">Binds 1 [4Fe-4S] cluster per dimer.</text>
</comment>
<comment type="subunit">
    <text evidence="1">Homodimer.</text>
</comment>
<comment type="PTM">
    <text evidence="1">The reversible ADP-ribosylation of Arg-102 inactivates the nitrogenase reductase and regulates nitrogenase activity.</text>
</comment>
<comment type="similarity">
    <text evidence="1">Belongs to the NifH/BchL/ChlL family.</text>
</comment>
<gene>
    <name evidence="1" type="primary">nifH</name>
    <name type="ordered locus">ZMO1823</name>
</gene>
<sequence>MSKIRQIAFYGKGGIGKSTTSQNTLAALVELGQKILIVGCDPKADSTRLILNSKAQDTVLSLAAEAGSVEDLELEDVLKLGYKDIKCVESGGPEPGVGCAGRGVITSINFLEENGAYDDVDYVSYDVLGDVVCGGFAMPIRENKAQEIYIVMSGEMMALYAANNIAKGILKYAGTGGVRLGGLICNERQTDREYELAEALAKRLNSKLIHFVPRNNIVQHAELRKQTVLQYAPDSDQANEYRELARKIHENSGKGTIPTPITMEELEEMLLEFGIMKTEEQELAELAAKESAVAK</sequence>
<evidence type="ECO:0000255" key="1">
    <source>
        <dbReference type="HAMAP-Rule" id="MF_00533"/>
    </source>
</evidence>
<organism>
    <name type="scientific">Zymomonas mobilis subsp. mobilis (strain ATCC 31821 / ZM4 / CP4)</name>
    <dbReference type="NCBI Taxonomy" id="264203"/>
    <lineage>
        <taxon>Bacteria</taxon>
        <taxon>Pseudomonadati</taxon>
        <taxon>Pseudomonadota</taxon>
        <taxon>Alphaproteobacteria</taxon>
        <taxon>Sphingomonadales</taxon>
        <taxon>Zymomonadaceae</taxon>
        <taxon>Zymomonas</taxon>
    </lineage>
</organism>